<protein>
    <recommendedName>
        <fullName>Mpv17-like protein</fullName>
    </recommendedName>
    <alternativeName>
        <fullName>M-LP homolog</fullName>
        <shortName>M-LPH</shortName>
    </alternativeName>
</protein>
<dbReference type="EMBL" id="DQ004255">
    <property type="protein sequence ID" value="AAY58892.1"/>
    <property type="molecule type" value="mRNA"/>
</dbReference>
<dbReference type="EMBL" id="DQ004256">
    <property type="protein sequence ID" value="AAY58893.1"/>
    <property type="molecule type" value="mRNA"/>
</dbReference>
<dbReference type="EMBL" id="AK096918">
    <property type="protein sequence ID" value="BAC04895.1"/>
    <property type="molecule type" value="mRNA"/>
</dbReference>
<dbReference type="EMBL" id="AK293380">
    <property type="protein sequence ID" value="BAG56892.1"/>
    <property type="molecule type" value="mRNA"/>
</dbReference>
<dbReference type="EMBL" id="CH471226">
    <property type="protein sequence ID" value="EAW53915.1"/>
    <property type="molecule type" value="Genomic_DNA"/>
</dbReference>
<dbReference type="EMBL" id="BC061514">
    <property type="protein sequence ID" value="AAH61514.1"/>
    <property type="molecule type" value="mRNA"/>
</dbReference>
<dbReference type="CCDS" id="CCDS10560.1">
    <molecule id="Q2QL34-2"/>
</dbReference>
<dbReference type="CCDS" id="CCDS45421.1">
    <molecule id="Q2QL34-1"/>
</dbReference>
<dbReference type="RefSeq" id="NP_001121895.1">
    <molecule id="Q2QL34-1"/>
    <property type="nucleotide sequence ID" value="NM_001128423.2"/>
</dbReference>
<dbReference type="RefSeq" id="NP_776164.2">
    <molecule id="Q2QL34-2"/>
    <property type="nucleotide sequence ID" value="NM_173803.4"/>
</dbReference>
<dbReference type="BioGRID" id="129068">
    <property type="interactions" value="2"/>
</dbReference>
<dbReference type="FunCoup" id="Q2QL34">
    <property type="interactions" value="939"/>
</dbReference>
<dbReference type="STRING" id="9606.ENSP00000379669"/>
<dbReference type="iPTMnet" id="Q2QL34"/>
<dbReference type="PhosphoSitePlus" id="Q2QL34"/>
<dbReference type="BioMuta" id="MPV17L"/>
<dbReference type="DMDM" id="121941708"/>
<dbReference type="MassIVE" id="Q2QL34"/>
<dbReference type="PaxDb" id="9606-ENSP00000379669"/>
<dbReference type="PeptideAtlas" id="Q2QL34"/>
<dbReference type="ProteomicsDB" id="61440">
    <molecule id="Q2QL34-1"/>
</dbReference>
<dbReference type="ProteomicsDB" id="61441">
    <molecule id="Q2QL34-2"/>
</dbReference>
<dbReference type="Pumba" id="Q2QL34"/>
<dbReference type="Antibodypedia" id="42860">
    <property type="antibodies" value="32 antibodies from 13 providers"/>
</dbReference>
<dbReference type="DNASU" id="255027"/>
<dbReference type="Ensembl" id="ENST00000287594.7">
    <molecule id="Q2QL34-2"/>
    <property type="protein sequence ID" value="ENSP00000287594.6"/>
    <property type="gene ID" value="ENSG00000156968.9"/>
</dbReference>
<dbReference type="Ensembl" id="ENST00000396385.4">
    <molecule id="Q2QL34-1"/>
    <property type="protein sequence ID" value="ENSP00000379669.3"/>
    <property type="gene ID" value="ENSG00000156968.9"/>
</dbReference>
<dbReference type="Ensembl" id="ENST00000612041.2">
    <molecule id="Q2QL34-2"/>
    <property type="protein sequence ID" value="ENSP00000483043.1"/>
    <property type="gene ID" value="ENSG00000275543.4"/>
</dbReference>
<dbReference type="Ensembl" id="ENST00000617552.4">
    <molecule id="Q2QL34-1"/>
    <property type="protein sequence ID" value="ENSP00000484675.1"/>
    <property type="gene ID" value="ENSG00000275543.4"/>
</dbReference>
<dbReference type="GeneID" id="255027"/>
<dbReference type="KEGG" id="hsa:255027"/>
<dbReference type="MANE-Select" id="ENST00000396385.4">
    <property type="protein sequence ID" value="ENSP00000379669.3"/>
    <property type="RefSeq nucleotide sequence ID" value="NM_001128423.2"/>
    <property type="RefSeq protein sequence ID" value="NP_001121895.1"/>
</dbReference>
<dbReference type="UCSC" id="uc002ddm.3">
    <molecule id="Q2QL34-1"/>
    <property type="organism name" value="human"/>
</dbReference>
<dbReference type="AGR" id="HGNC:26827"/>
<dbReference type="CTD" id="255027"/>
<dbReference type="DisGeNET" id="255027"/>
<dbReference type="GeneCards" id="MPV17L"/>
<dbReference type="HGNC" id="HGNC:26827">
    <property type="gene designation" value="MPV17L"/>
</dbReference>
<dbReference type="HPA" id="ENSG00000156968">
    <property type="expression patterns" value="Tissue enhanced (pancreas)"/>
</dbReference>
<dbReference type="MIM" id="618100">
    <property type="type" value="gene"/>
</dbReference>
<dbReference type="neXtProt" id="NX_Q2QL34"/>
<dbReference type="OpenTargets" id="ENSG00000156968"/>
<dbReference type="PharmGKB" id="PA145007960"/>
<dbReference type="VEuPathDB" id="HostDB:ENSG00000156968"/>
<dbReference type="eggNOG" id="KOG1944">
    <property type="taxonomic scope" value="Eukaryota"/>
</dbReference>
<dbReference type="GeneTree" id="ENSGT00730000111088"/>
<dbReference type="HOGENOM" id="CLU_049109_11_0_1"/>
<dbReference type="InParanoid" id="Q2QL34"/>
<dbReference type="OMA" id="AGWWRVL"/>
<dbReference type="OrthoDB" id="5345392at2759"/>
<dbReference type="PAN-GO" id="Q2QL34">
    <property type="GO annotations" value="2 GO annotations based on evolutionary models"/>
</dbReference>
<dbReference type="PhylomeDB" id="Q2QL34"/>
<dbReference type="TreeFam" id="TF324392"/>
<dbReference type="PathwayCommons" id="Q2QL34"/>
<dbReference type="BioGRID-ORCS" id="255027">
    <property type="hits" value="13 hits in 1131 CRISPR screens"/>
</dbReference>
<dbReference type="ChiTaRS" id="MPV17L">
    <property type="organism name" value="human"/>
</dbReference>
<dbReference type="GenomeRNAi" id="255027"/>
<dbReference type="Pharos" id="Q2QL34">
    <property type="development level" value="Tbio"/>
</dbReference>
<dbReference type="PRO" id="PR:Q2QL34"/>
<dbReference type="Proteomes" id="UP000005640">
    <property type="component" value="Chromosome 16"/>
</dbReference>
<dbReference type="RNAct" id="Q2QL34">
    <property type="molecule type" value="protein"/>
</dbReference>
<dbReference type="Bgee" id="ENSG00000156968">
    <property type="expression patterns" value="Expressed in body of pancreas and 104 other cell types or tissues"/>
</dbReference>
<dbReference type="ExpressionAtlas" id="Q2QL34">
    <property type="expression patterns" value="baseline and differential"/>
</dbReference>
<dbReference type="GO" id="GO:0005737">
    <property type="term" value="C:cytoplasm"/>
    <property type="evidence" value="ECO:0000318"/>
    <property type="project" value="GO_Central"/>
</dbReference>
<dbReference type="GO" id="GO:0043231">
    <property type="term" value="C:intracellular membrane-bounded organelle"/>
    <property type="evidence" value="ECO:0000314"/>
    <property type="project" value="HPA"/>
</dbReference>
<dbReference type="GO" id="GO:0005739">
    <property type="term" value="C:mitochondrion"/>
    <property type="evidence" value="ECO:0000318"/>
    <property type="project" value="GO_Central"/>
</dbReference>
<dbReference type="GO" id="GO:0005778">
    <property type="term" value="C:peroxisomal membrane"/>
    <property type="evidence" value="ECO:0007669"/>
    <property type="project" value="UniProtKB-SubCell"/>
</dbReference>
<dbReference type="GO" id="GO:0005777">
    <property type="term" value="C:peroxisome"/>
    <property type="evidence" value="ECO:0000314"/>
    <property type="project" value="UniProtKB"/>
</dbReference>
<dbReference type="GO" id="GO:0061668">
    <property type="term" value="P:mitochondrial ribosome assembly"/>
    <property type="evidence" value="ECO:0000318"/>
    <property type="project" value="GO_Central"/>
</dbReference>
<dbReference type="GO" id="GO:0010730">
    <property type="term" value="P:negative regulation of hydrogen peroxide biosynthetic process"/>
    <property type="evidence" value="ECO:0000314"/>
    <property type="project" value="BHF-UCL"/>
</dbReference>
<dbReference type="GO" id="GO:1901029">
    <property type="term" value="P:negative regulation of mitochondrial outer membrane permeabilization involved in apoptotic signaling pathway"/>
    <property type="evidence" value="ECO:0000314"/>
    <property type="project" value="BHF-UCL"/>
</dbReference>
<dbReference type="GO" id="GO:0072593">
    <property type="term" value="P:reactive oxygen species metabolic process"/>
    <property type="evidence" value="ECO:0000314"/>
    <property type="project" value="UniProtKB"/>
</dbReference>
<dbReference type="InterPro" id="IPR007248">
    <property type="entry name" value="Mpv17_PMP22"/>
</dbReference>
<dbReference type="PANTHER" id="PTHR11266:SF39">
    <property type="entry name" value="MPV17-LIKE PROTEIN"/>
    <property type="match status" value="1"/>
</dbReference>
<dbReference type="PANTHER" id="PTHR11266">
    <property type="entry name" value="PEROXISOMAL MEMBRANE PROTEIN 2, PXMP2 MPV17"/>
    <property type="match status" value="1"/>
</dbReference>
<dbReference type="Pfam" id="PF04117">
    <property type="entry name" value="Mpv17_PMP22"/>
    <property type="match status" value="1"/>
</dbReference>
<reference key="1">
    <citation type="journal article" date="2006" name="Biochem. Biophys. Res. Commun.">
        <title>Human Mpv17-like protein is localized in peroxisomes and regulates expression of antioxidant enzymes.</title>
        <authorList>
            <person name="Iida R."/>
            <person name="Yasuda T."/>
            <person name="Tsubota E."/>
            <person name="Takatsuka H."/>
            <person name="Matsuki T."/>
            <person name="Kishi K."/>
        </authorList>
    </citation>
    <scope>NUCLEOTIDE SEQUENCE [MRNA] (ISOFORMS 1 AND 2)</scope>
    <scope>FUNCTION</scope>
    <scope>SUBCELLULAR LOCATION</scope>
    <scope>TISSUE SPECIFICITY</scope>
</reference>
<reference key="2">
    <citation type="journal article" date="2004" name="Nat. Genet.">
        <title>Complete sequencing and characterization of 21,243 full-length human cDNAs.</title>
        <authorList>
            <person name="Ota T."/>
            <person name="Suzuki Y."/>
            <person name="Nishikawa T."/>
            <person name="Otsuki T."/>
            <person name="Sugiyama T."/>
            <person name="Irie R."/>
            <person name="Wakamatsu A."/>
            <person name="Hayashi K."/>
            <person name="Sato H."/>
            <person name="Nagai K."/>
            <person name="Kimura K."/>
            <person name="Makita H."/>
            <person name="Sekine M."/>
            <person name="Obayashi M."/>
            <person name="Nishi T."/>
            <person name="Shibahara T."/>
            <person name="Tanaka T."/>
            <person name="Ishii S."/>
            <person name="Yamamoto J."/>
            <person name="Saito K."/>
            <person name="Kawai Y."/>
            <person name="Isono Y."/>
            <person name="Nakamura Y."/>
            <person name="Nagahari K."/>
            <person name="Murakami K."/>
            <person name="Yasuda T."/>
            <person name="Iwayanagi T."/>
            <person name="Wagatsuma M."/>
            <person name="Shiratori A."/>
            <person name="Sudo H."/>
            <person name="Hosoiri T."/>
            <person name="Kaku Y."/>
            <person name="Kodaira H."/>
            <person name="Kondo H."/>
            <person name="Sugawara M."/>
            <person name="Takahashi M."/>
            <person name="Kanda K."/>
            <person name="Yokoi T."/>
            <person name="Furuya T."/>
            <person name="Kikkawa E."/>
            <person name="Omura Y."/>
            <person name="Abe K."/>
            <person name="Kamihara K."/>
            <person name="Katsuta N."/>
            <person name="Sato K."/>
            <person name="Tanikawa M."/>
            <person name="Yamazaki M."/>
            <person name="Ninomiya K."/>
            <person name="Ishibashi T."/>
            <person name="Yamashita H."/>
            <person name="Murakawa K."/>
            <person name="Fujimori K."/>
            <person name="Tanai H."/>
            <person name="Kimata M."/>
            <person name="Watanabe M."/>
            <person name="Hiraoka S."/>
            <person name="Chiba Y."/>
            <person name="Ishida S."/>
            <person name="Ono Y."/>
            <person name="Takiguchi S."/>
            <person name="Watanabe S."/>
            <person name="Yosida M."/>
            <person name="Hotuta T."/>
            <person name="Kusano J."/>
            <person name="Kanehori K."/>
            <person name="Takahashi-Fujii A."/>
            <person name="Hara H."/>
            <person name="Tanase T.-O."/>
            <person name="Nomura Y."/>
            <person name="Togiya S."/>
            <person name="Komai F."/>
            <person name="Hara R."/>
            <person name="Takeuchi K."/>
            <person name="Arita M."/>
            <person name="Imose N."/>
            <person name="Musashino K."/>
            <person name="Yuuki H."/>
            <person name="Oshima A."/>
            <person name="Sasaki N."/>
            <person name="Aotsuka S."/>
            <person name="Yoshikawa Y."/>
            <person name="Matsunawa H."/>
            <person name="Ichihara T."/>
            <person name="Shiohata N."/>
            <person name="Sano S."/>
            <person name="Moriya S."/>
            <person name="Momiyama H."/>
            <person name="Satoh N."/>
            <person name="Takami S."/>
            <person name="Terashima Y."/>
            <person name="Suzuki O."/>
            <person name="Nakagawa S."/>
            <person name="Senoh A."/>
            <person name="Mizoguchi H."/>
            <person name="Goto Y."/>
            <person name="Shimizu F."/>
            <person name="Wakebe H."/>
            <person name="Hishigaki H."/>
            <person name="Watanabe T."/>
            <person name="Sugiyama A."/>
            <person name="Takemoto M."/>
            <person name="Kawakami B."/>
            <person name="Yamazaki M."/>
            <person name="Watanabe K."/>
            <person name="Kumagai A."/>
            <person name="Itakura S."/>
            <person name="Fukuzumi Y."/>
            <person name="Fujimori Y."/>
            <person name="Komiyama M."/>
            <person name="Tashiro H."/>
            <person name="Tanigami A."/>
            <person name="Fujiwara T."/>
            <person name="Ono T."/>
            <person name="Yamada K."/>
            <person name="Fujii Y."/>
            <person name="Ozaki K."/>
            <person name="Hirao M."/>
            <person name="Ohmori Y."/>
            <person name="Kawabata A."/>
            <person name="Hikiji T."/>
            <person name="Kobatake N."/>
            <person name="Inagaki H."/>
            <person name="Ikema Y."/>
            <person name="Okamoto S."/>
            <person name="Okitani R."/>
            <person name="Kawakami T."/>
            <person name="Noguchi S."/>
            <person name="Itoh T."/>
            <person name="Shigeta K."/>
            <person name="Senba T."/>
            <person name="Matsumura K."/>
            <person name="Nakajima Y."/>
            <person name="Mizuno T."/>
            <person name="Morinaga M."/>
            <person name="Sasaki M."/>
            <person name="Togashi T."/>
            <person name="Oyama M."/>
            <person name="Hata H."/>
            <person name="Watanabe M."/>
            <person name="Komatsu T."/>
            <person name="Mizushima-Sugano J."/>
            <person name="Satoh T."/>
            <person name="Shirai Y."/>
            <person name="Takahashi Y."/>
            <person name="Nakagawa K."/>
            <person name="Okumura K."/>
            <person name="Nagase T."/>
            <person name="Nomura N."/>
            <person name="Kikuchi H."/>
            <person name="Masuho Y."/>
            <person name="Yamashita R."/>
            <person name="Nakai K."/>
            <person name="Yada T."/>
            <person name="Nakamura Y."/>
            <person name="Ohara O."/>
            <person name="Isogai T."/>
            <person name="Sugano S."/>
        </authorList>
    </citation>
    <scope>NUCLEOTIDE SEQUENCE [LARGE SCALE MRNA] (ISOFORMS 1 AND 2)</scope>
    <source>
        <tissue>Urinary bladder</tissue>
    </source>
</reference>
<reference key="3">
    <citation type="submission" date="2005-07" db="EMBL/GenBank/DDBJ databases">
        <authorList>
            <person name="Mural R.J."/>
            <person name="Istrail S."/>
            <person name="Sutton G.G."/>
            <person name="Florea L."/>
            <person name="Halpern A.L."/>
            <person name="Mobarry C.M."/>
            <person name="Lippert R."/>
            <person name="Walenz B."/>
            <person name="Shatkay H."/>
            <person name="Dew I."/>
            <person name="Miller J.R."/>
            <person name="Flanigan M.J."/>
            <person name="Edwards N.J."/>
            <person name="Bolanos R."/>
            <person name="Fasulo D."/>
            <person name="Halldorsson B.V."/>
            <person name="Hannenhalli S."/>
            <person name="Turner R."/>
            <person name="Yooseph S."/>
            <person name="Lu F."/>
            <person name="Nusskern D.R."/>
            <person name="Shue B.C."/>
            <person name="Zheng X.H."/>
            <person name="Zhong F."/>
            <person name="Delcher A.L."/>
            <person name="Huson D.H."/>
            <person name="Kravitz S.A."/>
            <person name="Mouchard L."/>
            <person name="Reinert K."/>
            <person name="Remington K.A."/>
            <person name="Clark A.G."/>
            <person name="Waterman M.S."/>
            <person name="Eichler E.E."/>
            <person name="Adams M.D."/>
            <person name="Hunkapiller M.W."/>
            <person name="Myers E.W."/>
            <person name="Venter J.C."/>
        </authorList>
    </citation>
    <scope>NUCLEOTIDE SEQUENCE [LARGE SCALE GENOMIC DNA] (ISOFORM 2)</scope>
</reference>
<reference key="4">
    <citation type="journal article" date="2004" name="Genome Res.">
        <title>The status, quality, and expansion of the NIH full-length cDNA project: the Mammalian Gene Collection (MGC).</title>
        <authorList>
            <consortium name="The MGC Project Team"/>
        </authorList>
    </citation>
    <scope>NUCLEOTIDE SEQUENCE [LARGE SCALE MRNA] (ISOFORM 2)</scope>
    <source>
        <tissue>Uterus</tissue>
    </source>
</reference>
<reference key="5">
    <citation type="journal article" date="2012" name="Free Radic. Biol. Med.">
        <title>Identification of Rhit as a novel transcriptional repressor of human Mpv17-like protein with a mitigating effect on mitochondrial dysfunction, and its transcriptional regulation by FOXD3 and GABP.</title>
        <authorList>
            <person name="Iida R."/>
            <person name="Ueki M."/>
            <person name="Yasuda T."/>
        </authorList>
    </citation>
    <scope>FUNCTION (ISOFORM 1)</scope>
    <scope>DEVELOPMENTAL STAGE</scope>
</reference>
<accession>Q2QL34</accession>
<accession>B4DDY1</accession>
<accession>Q6P7T6</accession>
<accession>Q8N8E9</accession>
<keyword id="KW-0025">Alternative splicing</keyword>
<keyword id="KW-0472">Membrane</keyword>
<keyword id="KW-0576">Peroxisome</keyword>
<keyword id="KW-1267">Proteomics identification</keyword>
<keyword id="KW-1185">Reference proteome</keyword>
<keyword id="KW-0812">Transmembrane</keyword>
<keyword id="KW-1133">Transmembrane helix</keyword>
<gene>
    <name type="primary">MPV17L</name>
</gene>
<evidence type="ECO:0000250" key="1"/>
<evidence type="ECO:0000255" key="2"/>
<evidence type="ECO:0000269" key="3">
    <source>
    </source>
</evidence>
<evidence type="ECO:0000269" key="4">
    <source>
    </source>
</evidence>
<evidence type="ECO:0000303" key="5">
    <source>
    </source>
</evidence>
<evidence type="ECO:0000303" key="6">
    <source>
    </source>
</evidence>
<evidence type="ECO:0000303" key="7">
    <source>
    </source>
</evidence>
<evidence type="ECO:0000305" key="8"/>
<feature type="chain" id="PRO_0000333178" description="Mpv17-like protein">
    <location>
        <begin position="1"/>
        <end position="196"/>
    </location>
</feature>
<feature type="topological domain" description="Cytoplasmic">
    <location>
        <begin position="1"/>
        <end position="16"/>
    </location>
</feature>
<feature type="transmembrane region" description="Helical" evidence="2">
    <location>
        <begin position="17"/>
        <end position="34"/>
    </location>
</feature>
<feature type="topological domain" description="Lumenal">
    <location>
        <begin position="35"/>
        <end position="50"/>
    </location>
</feature>
<feature type="transmembrane region" description="Helical" evidence="2">
    <location>
        <begin position="51"/>
        <end position="67"/>
    </location>
</feature>
<feature type="topological domain" description="Cytoplasmic">
    <location>
        <begin position="68"/>
        <end position="90"/>
    </location>
</feature>
<feature type="transmembrane region" description="Helical" evidence="2">
    <location>
        <begin position="91"/>
        <end position="108"/>
    </location>
</feature>
<feature type="topological domain" description="Lumenal">
    <location>
        <begin position="109"/>
        <end position="150"/>
    </location>
</feature>
<feature type="transmembrane region" description="Helical" evidence="2">
    <location>
        <begin position="151"/>
        <end position="167"/>
    </location>
</feature>
<feature type="topological domain" description="Cytoplasmic">
    <location>
        <begin position="168"/>
        <end position="196"/>
    </location>
</feature>
<feature type="region of interest" description="Targeting to peroxisomes" evidence="1">
    <location>
        <begin position="16"/>
        <end position="55"/>
    </location>
</feature>
<feature type="splice variant" id="VSP_033462" description="In isoform 2." evidence="5 6 7">
    <original>GMSILQGKDDIFLDLKQKFWNTYLSGLMYWPFVQLTNFSLVPVQ</original>
    <variation>EWTDVLALCTADQLQPCSCSMENSLRWSLWFSLGHLHLFFPAEW</variation>
    <location>
        <begin position="104"/>
        <end position="147"/>
    </location>
</feature>
<feature type="splice variant" id="VSP_033463" description="In isoform 2." evidence="5 6 7">
    <location>
        <begin position="148"/>
        <end position="196"/>
    </location>
</feature>
<feature type="sequence conflict" description="In Ref. 2; BAC04895." evidence="8" ref="2">
    <original>T</original>
    <variation>I</variation>
    <location sequence="Q2QL34-2">
        <position position="106"/>
    </location>
</feature>
<name>MP17L_HUMAN</name>
<organism>
    <name type="scientific">Homo sapiens</name>
    <name type="common">Human</name>
    <dbReference type="NCBI Taxonomy" id="9606"/>
    <lineage>
        <taxon>Eukaryota</taxon>
        <taxon>Metazoa</taxon>
        <taxon>Chordata</taxon>
        <taxon>Craniata</taxon>
        <taxon>Vertebrata</taxon>
        <taxon>Euteleostomi</taxon>
        <taxon>Mammalia</taxon>
        <taxon>Eutheria</taxon>
        <taxon>Euarchontoglires</taxon>
        <taxon>Primates</taxon>
        <taxon>Haplorrhini</taxon>
        <taxon>Catarrhini</taxon>
        <taxon>Hominidae</taxon>
        <taxon>Homo</taxon>
    </lineage>
</organism>
<comment type="function">
    <molecule>Isoform 1</molecule>
    <text evidence="3 4">Participates in reactive oxygen species metabolism by up- or down-regulation of the genes of antioxidant enzymes (PubMed:16631601). Protective against the mitochondrial apoptotic cascade (PubMed:22306510).</text>
</comment>
<comment type="subcellular location">
    <molecule>Isoform 1</molecule>
    <subcellularLocation>
        <location evidence="3">Peroxisome membrane</location>
        <topology>Multi-pass membrane protein</topology>
    </subcellularLocation>
</comment>
<comment type="alternative products">
    <event type="alternative splicing"/>
    <isoform>
        <id>Q2QL34-1</id>
        <name>1</name>
        <name>M-LPH1</name>
        <sequence type="displayed"/>
    </isoform>
    <isoform>
        <id>Q2QL34-2</id>
        <name>2</name>
        <name>M-LPH2</name>
        <sequence type="described" ref="VSP_033462 VSP_033463"/>
    </isoform>
</comment>
<comment type="tissue specificity">
    <text evidence="3">Isoform 1 is detected in the kidney (at protein level). Isoform 1 and isoform 2 are expressed in the kidney, heart, liver, lung, pancreas and skeletal muscle.</text>
</comment>
<comment type="developmental stage">
    <text evidence="4">In spleen levels are higher in adult than in fetal tissue.</text>
</comment>
<comment type="similarity">
    <text evidence="8">Belongs to the peroxisomal membrane protein PXMP2/4 family.</text>
</comment>
<proteinExistence type="evidence at protein level"/>
<sequence length="196" mass="22116">MAGWWPALSRAARRHPWPTNVLLYGSLVSAGDALQQRLQGREANWRQTRRVATLVVTFHANFNYVWLRLLERALPGRAPHALLAKLLCDQVVGAPIAVSAFYVGMSILQGKDDIFLDLKQKFWNTYLSGLMYWPFVQLTNFSLVPVQWRTAYAGVCGFLWATFICFSQQSGDGTFKSAFTILYTKGTSATEGYPKK</sequence>